<name>SBCC_STAAS</name>
<protein>
    <recommendedName>
        <fullName>Nuclease SbcCD subunit C</fullName>
    </recommendedName>
</protein>
<reference key="1">
    <citation type="journal article" date="2004" name="Proc. Natl. Acad. Sci. U.S.A.">
        <title>Complete genomes of two clinical Staphylococcus aureus strains: evidence for the rapid evolution of virulence and drug resistance.</title>
        <authorList>
            <person name="Holden M.T.G."/>
            <person name="Feil E.J."/>
            <person name="Lindsay J.A."/>
            <person name="Peacock S.J."/>
            <person name="Day N.P.J."/>
            <person name="Enright M.C."/>
            <person name="Foster T.J."/>
            <person name="Moore C.E."/>
            <person name="Hurst L."/>
            <person name="Atkin R."/>
            <person name="Barron A."/>
            <person name="Bason N."/>
            <person name="Bentley S.D."/>
            <person name="Chillingworth C."/>
            <person name="Chillingworth T."/>
            <person name="Churcher C."/>
            <person name="Clark L."/>
            <person name="Corton C."/>
            <person name="Cronin A."/>
            <person name="Doggett J."/>
            <person name="Dowd L."/>
            <person name="Feltwell T."/>
            <person name="Hance Z."/>
            <person name="Harris B."/>
            <person name="Hauser H."/>
            <person name="Holroyd S."/>
            <person name="Jagels K."/>
            <person name="James K.D."/>
            <person name="Lennard N."/>
            <person name="Line A."/>
            <person name="Mayes R."/>
            <person name="Moule S."/>
            <person name="Mungall K."/>
            <person name="Ormond D."/>
            <person name="Quail M.A."/>
            <person name="Rabbinowitsch E."/>
            <person name="Rutherford K.M."/>
            <person name="Sanders M."/>
            <person name="Sharp S."/>
            <person name="Simmonds M."/>
            <person name="Stevens K."/>
            <person name="Whitehead S."/>
            <person name="Barrell B.G."/>
            <person name="Spratt B.G."/>
            <person name="Parkhill J."/>
        </authorList>
    </citation>
    <scope>NUCLEOTIDE SEQUENCE [LARGE SCALE GENOMIC DNA]</scope>
    <source>
        <strain>MSSA476</strain>
    </source>
</reference>
<proteinExistence type="inferred from homology"/>
<dbReference type="EMBL" id="BX571857">
    <property type="protein sequence ID" value="CAG43064.1"/>
    <property type="molecule type" value="Genomic_DNA"/>
</dbReference>
<dbReference type="RefSeq" id="WP_000803170.1">
    <property type="nucleotide sequence ID" value="NC_002953.3"/>
</dbReference>
<dbReference type="SMR" id="Q6G9L2"/>
<dbReference type="KEGG" id="sas:SAS1286"/>
<dbReference type="HOGENOM" id="CLU_004785_2_1_9"/>
<dbReference type="GO" id="GO:0005524">
    <property type="term" value="F:ATP binding"/>
    <property type="evidence" value="ECO:0007669"/>
    <property type="project" value="UniProtKB-KW"/>
</dbReference>
<dbReference type="GO" id="GO:0016887">
    <property type="term" value="F:ATP hydrolysis activity"/>
    <property type="evidence" value="ECO:0007669"/>
    <property type="project" value="InterPro"/>
</dbReference>
<dbReference type="GO" id="GO:0004519">
    <property type="term" value="F:endonuclease activity"/>
    <property type="evidence" value="ECO:0007669"/>
    <property type="project" value="UniProtKB-KW"/>
</dbReference>
<dbReference type="GO" id="GO:0004527">
    <property type="term" value="F:exonuclease activity"/>
    <property type="evidence" value="ECO:0007669"/>
    <property type="project" value="UniProtKB-KW"/>
</dbReference>
<dbReference type="GO" id="GO:0006310">
    <property type="term" value="P:DNA recombination"/>
    <property type="evidence" value="ECO:0007669"/>
    <property type="project" value="UniProtKB-KW"/>
</dbReference>
<dbReference type="GO" id="GO:0006260">
    <property type="term" value="P:DNA replication"/>
    <property type="evidence" value="ECO:0007669"/>
    <property type="project" value="UniProtKB-KW"/>
</dbReference>
<dbReference type="GO" id="GO:0006302">
    <property type="term" value="P:double-strand break repair"/>
    <property type="evidence" value="ECO:0007669"/>
    <property type="project" value="InterPro"/>
</dbReference>
<dbReference type="CDD" id="cd03279">
    <property type="entry name" value="ABC_sbcCD"/>
    <property type="match status" value="1"/>
</dbReference>
<dbReference type="Gene3D" id="3.40.50.300">
    <property type="entry name" value="P-loop containing nucleotide triphosphate hydrolases"/>
    <property type="match status" value="2"/>
</dbReference>
<dbReference type="InterPro" id="IPR027417">
    <property type="entry name" value="P-loop_NTPase"/>
</dbReference>
<dbReference type="InterPro" id="IPR038729">
    <property type="entry name" value="Rad50/SbcC_AAA"/>
</dbReference>
<dbReference type="InterPro" id="IPR053380">
    <property type="entry name" value="SbcCD_Nuclease_C"/>
</dbReference>
<dbReference type="NCBIfam" id="NF041751">
    <property type="entry name" value="sbcc_Staph"/>
    <property type="match status" value="1"/>
</dbReference>
<dbReference type="PANTHER" id="PTHR32114">
    <property type="entry name" value="ABC TRANSPORTER ABCH.3"/>
    <property type="match status" value="1"/>
</dbReference>
<dbReference type="PANTHER" id="PTHR32114:SF2">
    <property type="entry name" value="ABC TRANSPORTER ABCH.3"/>
    <property type="match status" value="1"/>
</dbReference>
<dbReference type="Pfam" id="PF13476">
    <property type="entry name" value="AAA_23"/>
    <property type="match status" value="1"/>
</dbReference>
<dbReference type="Pfam" id="PF13558">
    <property type="entry name" value="SbcC_Walker_B"/>
    <property type="match status" value="1"/>
</dbReference>
<dbReference type="SUPFAM" id="SSF52540">
    <property type="entry name" value="P-loop containing nucleoside triphosphate hydrolases"/>
    <property type="match status" value="1"/>
</dbReference>
<dbReference type="SUPFAM" id="SSF75712">
    <property type="entry name" value="Rad50 coiled-coil Zn hook"/>
    <property type="match status" value="1"/>
</dbReference>
<feature type="chain" id="PRO_0000338465" description="Nuclease SbcCD subunit C">
    <location>
        <begin position="1"/>
        <end position="1009"/>
    </location>
</feature>
<feature type="coiled-coil region" evidence="2">
    <location>
        <begin position="176"/>
        <end position="364"/>
    </location>
</feature>
<feature type="coiled-coil region" evidence="2">
    <location>
        <begin position="392"/>
        <end position="502"/>
    </location>
</feature>
<feature type="coiled-coil region" evidence="2">
    <location>
        <begin position="535"/>
        <end position="802"/>
    </location>
</feature>
<feature type="binding site" evidence="2">
    <location>
        <begin position="34"/>
        <end position="41"/>
    </location>
    <ligand>
        <name>ATP</name>
        <dbReference type="ChEBI" id="CHEBI:30616"/>
    </ligand>
</feature>
<organism>
    <name type="scientific">Staphylococcus aureus (strain MSSA476)</name>
    <dbReference type="NCBI Taxonomy" id="282459"/>
    <lineage>
        <taxon>Bacteria</taxon>
        <taxon>Bacillati</taxon>
        <taxon>Bacillota</taxon>
        <taxon>Bacilli</taxon>
        <taxon>Bacillales</taxon>
        <taxon>Staphylococcaceae</taxon>
        <taxon>Staphylococcus</taxon>
    </lineage>
</organism>
<comment type="function">
    <text evidence="1">SbcCD cleaves DNA hairpin structures. These structures can inhibit DNA replication and are intermediates in certain DNA recombination reactions. The complex acts as a 3'-&gt;5' double strand exonuclease that can open hairpins. It also has a 5' single-strand endonuclease activity (By similarity).</text>
</comment>
<comment type="subunit">
    <text evidence="1">Heterodimer of SbcC and SbcD.</text>
</comment>
<comment type="similarity">
    <text evidence="3">Belongs to the SMC family. SbcC subfamily.</text>
</comment>
<gene>
    <name type="primary">sbcC</name>
    <name type="ordered locus">SAS1286</name>
</gene>
<keyword id="KW-0067">ATP-binding</keyword>
<keyword id="KW-0175">Coiled coil</keyword>
<keyword id="KW-0233">DNA recombination</keyword>
<keyword id="KW-0235">DNA replication</keyword>
<keyword id="KW-0255">Endonuclease</keyword>
<keyword id="KW-0269">Exonuclease</keyword>
<keyword id="KW-0378">Hydrolase</keyword>
<keyword id="KW-0540">Nuclease</keyword>
<keyword id="KW-0547">Nucleotide-binding</keyword>
<accession>Q6G9L2</accession>
<evidence type="ECO:0000250" key="1"/>
<evidence type="ECO:0000255" key="2"/>
<evidence type="ECO:0000305" key="3"/>
<sequence>MKPLHLKLNNFGPFLKEEIDFSKIDNNELFLISGKTGSGKTMIFDAMTYALFGKASTEQREENDLRSHFADGKQPMSVTFEFQLNHRIYKVHRQGPYIKEGNTTKTNAKFDVFEMVDGKYEIRESKVISGTQFIIELLGVNADQFRQLFILPQGEFKRFLISNSREKQGILRTLFDSEKFEAIREILKEEVKKEKAQIENRYQQIDLLWQEIESFDDDNIKGLLGVATQQIDKLIENIPLLQARSKEILASVNESKETAIKEFEIIEKKTLENNILKDNINQLNKNKIDFVQLKEQQPEIEGIEAKLKLLQDITNLLNYIENREKIETKIANSKKDISKTNNKILNLDCDKRNIDKEKKMLEENGDLIESKISFIDKTRVLFNDINKYQQSYLNIERLRTEGEQLGDELNDLIKGLETVEDSIGNNESDYEKIIELNNTITNINNEINIIKENEKAKAELDKLLGSKQELENQINEETSILKNLEIKLDRYDKTKLDLNDKESFISEIKSAVNIGDQCPICGNEIQDLGHHIDFDSIAKRQNEIKEIEANIHAIKSNIAVHNSEIKFVNEKISNINIKTQSDFSLEVLNKRLLENENALNNQRDLNKFIEQMKEEKDNLTLQIHNKQLRLNKNESELKLCRDLITEFETLSKYNNITNFEVDYKKYVQDVNQHQELSKEIEDKLMQLSQRKLIEQNNLNHYENQLETYNNDLELNEQSIEMEMSRLNLTDDNDIDEIIAWRGEQEELEQKRDTYKKRYHEFEMEIARLESLTKDKELLDSDKLKDEYELKKGKMNTLIDEYSAVHYQCQNNINKTQSIVSHINYLNQELKDQQEIFQLAEIVGGKNNKNLTLENFVLIYYLDQIIAQANLRLATMSDNRYQLIRREAVSHGLSGLEIDVFDLHSNKSRHISSLSGGETFQSSLALALGLSEIVQQQSGGISLESIFIDEGFGTLDQETLETALDTLLNLKSTGRMVGIISHVSELKNRIPLVLEVKSDQYQSSTRFKRN</sequence>